<organism>
    <name type="scientific">Coccidioides immitis (strain RS)</name>
    <name type="common">Valley fever fungus</name>
    <dbReference type="NCBI Taxonomy" id="246410"/>
    <lineage>
        <taxon>Eukaryota</taxon>
        <taxon>Fungi</taxon>
        <taxon>Dikarya</taxon>
        <taxon>Ascomycota</taxon>
        <taxon>Pezizomycotina</taxon>
        <taxon>Eurotiomycetes</taxon>
        <taxon>Eurotiomycetidae</taxon>
        <taxon>Onygenales</taxon>
        <taxon>Onygenaceae</taxon>
        <taxon>Coccidioides</taxon>
    </lineage>
</organism>
<dbReference type="EC" id="3.4.21.-"/>
<dbReference type="EMBL" id="GG704911">
    <property type="protein sequence ID" value="EAS37474.3"/>
    <property type="status" value="ALT_INIT"/>
    <property type="molecule type" value="Genomic_DNA"/>
</dbReference>
<dbReference type="RefSeq" id="XP_001249057.1">
    <property type="nucleotide sequence ID" value="XM_001249056.2"/>
</dbReference>
<dbReference type="SMR" id="Q1E3N5"/>
<dbReference type="FunCoup" id="Q1E3N5">
    <property type="interactions" value="129"/>
</dbReference>
<dbReference type="STRING" id="246410.Q1E3N5"/>
<dbReference type="GeneID" id="4565254"/>
<dbReference type="KEGG" id="cim:CIMG_02828"/>
<dbReference type="InParanoid" id="Q1E3N5"/>
<dbReference type="OrthoDB" id="4217619at2759"/>
<dbReference type="Proteomes" id="UP000001261">
    <property type="component" value="Unassembled WGS sequence"/>
</dbReference>
<dbReference type="GO" id="GO:0005634">
    <property type="term" value="C:nucleus"/>
    <property type="evidence" value="ECO:0007669"/>
    <property type="project" value="UniProtKB-SubCell"/>
</dbReference>
<dbReference type="GO" id="GO:0004252">
    <property type="term" value="F:serine-type endopeptidase activity"/>
    <property type="evidence" value="ECO:0007669"/>
    <property type="project" value="InterPro"/>
</dbReference>
<dbReference type="GO" id="GO:0006915">
    <property type="term" value="P:apoptotic process"/>
    <property type="evidence" value="ECO:0007669"/>
    <property type="project" value="UniProtKB-KW"/>
</dbReference>
<dbReference type="GO" id="GO:0006508">
    <property type="term" value="P:proteolysis"/>
    <property type="evidence" value="ECO:0007669"/>
    <property type="project" value="UniProtKB-KW"/>
</dbReference>
<dbReference type="CDD" id="cd06786">
    <property type="entry name" value="cpPDZ1_ScNma111-like"/>
    <property type="match status" value="1"/>
</dbReference>
<dbReference type="CDD" id="cd06719">
    <property type="entry name" value="PDZ2-4_Nma111p-like"/>
    <property type="match status" value="2"/>
</dbReference>
<dbReference type="Gene3D" id="2.30.42.10">
    <property type="match status" value="2"/>
</dbReference>
<dbReference type="Gene3D" id="2.40.10.120">
    <property type="match status" value="1"/>
</dbReference>
<dbReference type="InterPro" id="IPR025926">
    <property type="entry name" value="PDZ-like_dom"/>
</dbReference>
<dbReference type="InterPro" id="IPR036034">
    <property type="entry name" value="PDZ_sf"/>
</dbReference>
<dbReference type="InterPro" id="IPR009003">
    <property type="entry name" value="Peptidase_S1_PA"/>
</dbReference>
<dbReference type="InterPro" id="IPR001940">
    <property type="entry name" value="Peptidase_S1C"/>
</dbReference>
<dbReference type="PANTHER" id="PTHR46366">
    <property type="entry name" value="PRO-APOPTOTIC SERINE PROTEASE NMA111"/>
    <property type="match status" value="1"/>
</dbReference>
<dbReference type="PANTHER" id="PTHR46366:SF8">
    <property type="entry name" value="PRO-APOPTOTIC SERINE PROTEASE NMA111"/>
    <property type="match status" value="1"/>
</dbReference>
<dbReference type="Pfam" id="PF12812">
    <property type="entry name" value="PDZ_1"/>
    <property type="match status" value="2"/>
</dbReference>
<dbReference type="Pfam" id="PF13365">
    <property type="entry name" value="Trypsin_2"/>
    <property type="match status" value="1"/>
</dbReference>
<dbReference type="PRINTS" id="PR00834">
    <property type="entry name" value="PROTEASES2C"/>
</dbReference>
<dbReference type="SUPFAM" id="SSF50156">
    <property type="entry name" value="PDZ domain-like"/>
    <property type="match status" value="3"/>
</dbReference>
<dbReference type="SUPFAM" id="SSF50494">
    <property type="entry name" value="Trypsin-like serine proteases"/>
    <property type="match status" value="2"/>
</dbReference>
<sequence>MELNGSPQKPKRKHSGDPHSLPSAKHLRPDSAAPSSPRISGDQTSGDLAVYGYRNVDSADAAAMQMKLPAVQTDSAEWQETIETVVKSVVSIHFCQTASFDTDLSMSSQATGFVVDAKRGYILTNRHVVCAGPFWGYCIFDNHEECDVTPIYRDPVHDFGILKFDPKAIKYMPLTELKLQPESARVGVEIRVVGNDAGEKLSILSGVISRLDRNAPEYGEGYSDFNTNYIQAAAAASGGSSGSPVVNIDGHVIALQAGGRADGAATDYFLPLDRPLRALQCIQKGELVSRGTIQTQWIIKPFDECRRLGLSPEWEAEVRRVAPKETGMLVAEIVLPEGPGDGKLQEGDVLIKANGELLTQFVRLDDILDSSVGGDVHLLVQRGGEDLEVTCKVQDLHAITPSRYVTVAGATFHDLSYQQARLYAIACKGVYVCEAAGSFKLESTFSGWIIDSVDKRPTRNLDEFIEVLKTIPDRARIVLSYRHIRDLHTRGTSIVHIDRHWHPHMRLAQRNDQTGLWDFTDLADPIPAEPPVPRKADFIQLDGVSHPAAADIVRSFVRVSCTMPVKLDGFPQARKTGFGLVVDAEKGLVVISRAIVPFDLCDINITVADSIIVSAKVVFLHPLQNYTIIQYDPSLVQAPVKTARLSPEYIKQGAETLFVGFNQNFRIVVAKTAVTDITTVAIPPNAAAPRYRAINLDAITVDTGLSSQCTSGVLLGEDGVIQALWLNYLGERTQSSHKDVEYHLGLATPSLIPVISQIQSGVIPRLRILDMETYVIQMSQARVMGVSEEWIEKVAKANAARHELFMVRKVDCASPLSADVRPLEEGDIILTLNDKLITRVSEFDMMYDQETLDALIVRNGEEMKIKIKTVPTEDLETDRALIFCGAVLQKPHHAVRQQISKLHSEVYVSARSRGSPAYQYGLSPTNFITAVNGVKTPDLDSFIREVSNIPNNTYFRLRAVTFDNVPWVVTMKKNDHYFPMSEYIKEPSAPLGWRTVNYDRGKERRGTGDIANLNADAMDEGRDEGVSDVEPDIE</sequence>
<comment type="function">
    <text evidence="1">Nuclear serine protease which mediates apoptosis.</text>
</comment>
<comment type="subcellular location">
    <subcellularLocation>
        <location evidence="1">Nucleus</location>
    </subcellularLocation>
</comment>
<comment type="similarity">
    <text evidence="4">Belongs to the peptidase S1C family.</text>
</comment>
<comment type="sequence caution" evidence="4">
    <conflict type="erroneous initiation">
        <sequence resource="EMBL-CDS" id="EAS37474"/>
    </conflict>
    <text>Extended N-terminus.</text>
</comment>
<feature type="chain" id="PRO_0000320351" description="Pro-apoptotic serine protease NMA111">
    <location>
        <begin position="1"/>
        <end position="1034"/>
    </location>
</feature>
<feature type="domain" description="PDZ 1">
    <location>
        <begin position="296"/>
        <end position="381"/>
    </location>
</feature>
<feature type="domain" description="PDZ 2">
    <location>
        <begin position="882"/>
        <end position="963"/>
    </location>
</feature>
<feature type="region of interest" description="Disordered" evidence="3">
    <location>
        <begin position="1"/>
        <end position="44"/>
    </location>
</feature>
<feature type="region of interest" description="Serine protease">
    <location>
        <begin position="89"/>
        <end position="273"/>
    </location>
</feature>
<feature type="region of interest" description="Disordered" evidence="3">
    <location>
        <begin position="1004"/>
        <end position="1034"/>
    </location>
</feature>
<feature type="compositionally biased region" description="Polar residues" evidence="3">
    <location>
        <begin position="33"/>
        <end position="44"/>
    </location>
</feature>
<feature type="active site" description="Charge relay system" evidence="2">
    <location>
        <position position="127"/>
    </location>
</feature>
<feature type="active site" description="Charge relay system" evidence="2">
    <location>
        <position position="158"/>
    </location>
</feature>
<feature type="active site" description="Charge relay system" evidence="2">
    <location>
        <position position="240"/>
    </location>
</feature>
<proteinExistence type="inferred from homology"/>
<keyword id="KW-0053">Apoptosis</keyword>
<keyword id="KW-0378">Hydrolase</keyword>
<keyword id="KW-0539">Nucleus</keyword>
<keyword id="KW-0645">Protease</keyword>
<keyword id="KW-1185">Reference proteome</keyword>
<keyword id="KW-0677">Repeat</keyword>
<keyword id="KW-0720">Serine protease</keyword>
<protein>
    <recommendedName>
        <fullName>Pro-apoptotic serine protease NMA111</fullName>
        <ecNumber>3.4.21.-</ecNumber>
    </recommendedName>
</protein>
<name>NM111_COCIM</name>
<evidence type="ECO:0000250" key="1"/>
<evidence type="ECO:0000255" key="2"/>
<evidence type="ECO:0000256" key="3">
    <source>
        <dbReference type="SAM" id="MobiDB-lite"/>
    </source>
</evidence>
<evidence type="ECO:0000305" key="4"/>
<accession>Q1E3N5</accession>
<accession>J3KAD6</accession>
<reference key="1">
    <citation type="journal article" date="2009" name="Genome Res.">
        <title>Comparative genomic analyses of the human fungal pathogens Coccidioides and their relatives.</title>
        <authorList>
            <person name="Sharpton T.J."/>
            <person name="Stajich J.E."/>
            <person name="Rounsley S.D."/>
            <person name="Gardner M.J."/>
            <person name="Wortman J.R."/>
            <person name="Jordar V.S."/>
            <person name="Maiti R."/>
            <person name="Kodira C.D."/>
            <person name="Neafsey D.E."/>
            <person name="Zeng Q."/>
            <person name="Hung C.-Y."/>
            <person name="McMahan C."/>
            <person name="Muszewska A."/>
            <person name="Grynberg M."/>
            <person name="Mandel M.A."/>
            <person name="Kellner E.M."/>
            <person name="Barker B.M."/>
            <person name="Galgiani J.N."/>
            <person name="Orbach M.J."/>
            <person name="Kirkland T.N."/>
            <person name="Cole G.T."/>
            <person name="Henn M.R."/>
            <person name="Birren B.W."/>
            <person name="Taylor J.W."/>
        </authorList>
    </citation>
    <scope>NUCLEOTIDE SEQUENCE [LARGE SCALE GENOMIC DNA]</scope>
    <source>
        <strain>RS</strain>
    </source>
</reference>
<reference key="2">
    <citation type="journal article" date="2010" name="Genome Res.">
        <title>Population genomic sequencing of Coccidioides fungi reveals recent hybridization and transposon control.</title>
        <authorList>
            <person name="Neafsey D.E."/>
            <person name="Barker B.M."/>
            <person name="Sharpton T.J."/>
            <person name="Stajich J.E."/>
            <person name="Park D.J."/>
            <person name="Whiston E."/>
            <person name="Hung C.-Y."/>
            <person name="McMahan C."/>
            <person name="White J."/>
            <person name="Sykes S."/>
            <person name="Heiman D."/>
            <person name="Young S."/>
            <person name="Zeng Q."/>
            <person name="Abouelleil A."/>
            <person name="Aftuck L."/>
            <person name="Bessette D."/>
            <person name="Brown A."/>
            <person name="FitzGerald M."/>
            <person name="Lui A."/>
            <person name="Macdonald J.P."/>
            <person name="Priest M."/>
            <person name="Orbach M.J."/>
            <person name="Galgiani J.N."/>
            <person name="Kirkland T.N."/>
            <person name="Cole G.T."/>
            <person name="Birren B.W."/>
            <person name="Henn M.R."/>
            <person name="Taylor J.W."/>
            <person name="Rounsley S.D."/>
        </authorList>
    </citation>
    <scope>GENOME REANNOTATION</scope>
    <source>
        <strain>RS</strain>
    </source>
</reference>
<gene>
    <name type="primary">NMA111</name>
    <name type="ORF">CIMG_02828</name>
</gene>